<protein>
    <recommendedName>
        <fullName evidence="1">HTH-type transcriptional repressor FabR</fullName>
    </recommendedName>
</protein>
<dbReference type="EMBL" id="CP001063">
    <property type="protein sequence ID" value="ACD09366.1"/>
    <property type="molecule type" value="Genomic_DNA"/>
</dbReference>
<dbReference type="SMR" id="B2TWF8"/>
<dbReference type="STRING" id="344609.SbBS512_E4449"/>
<dbReference type="KEGG" id="sbc:SbBS512_E4449"/>
<dbReference type="HOGENOM" id="CLU_081861_0_0_6"/>
<dbReference type="Proteomes" id="UP000001030">
    <property type="component" value="Chromosome"/>
</dbReference>
<dbReference type="GO" id="GO:0005737">
    <property type="term" value="C:cytoplasm"/>
    <property type="evidence" value="ECO:0007669"/>
    <property type="project" value="UniProtKB-SubCell"/>
</dbReference>
<dbReference type="GO" id="GO:0003677">
    <property type="term" value="F:DNA binding"/>
    <property type="evidence" value="ECO:0007669"/>
    <property type="project" value="UniProtKB-KW"/>
</dbReference>
<dbReference type="GO" id="GO:0003700">
    <property type="term" value="F:DNA-binding transcription factor activity"/>
    <property type="evidence" value="ECO:0007669"/>
    <property type="project" value="UniProtKB-UniRule"/>
</dbReference>
<dbReference type="GO" id="GO:0006633">
    <property type="term" value="P:fatty acid biosynthetic process"/>
    <property type="evidence" value="ECO:0007669"/>
    <property type="project" value="UniProtKB-UniRule"/>
</dbReference>
<dbReference type="GO" id="GO:0045717">
    <property type="term" value="P:negative regulation of fatty acid biosynthetic process"/>
    <property type="evidence" value="ECO:0007669"/>
    <property type="project" value="UniProtKB-UniRule"/>
</dbReference>
<dbReference type="FunFam" id="1.10.10.60:FF:000034">
    <property type="entry name" value="HTH-type transcriptional repressor FabR"/>
    <property type="match status" value="1"/>
</dbReference>
<dbReference type="FunFam" id="1.10.357.10:FF:000001">
    <property type="entry name" value="HTH-type transcriptional repressor FabR"/>
    <property type="match status" value="1"/>
</dbReference>
<dbReference type="Gene3D" id="1.10.10.60">
    <property type="entry name" value="Homeodomain-like"/>
    <property type="match status" value="1"/>
</dbReference>
<dbReference type="Gene3D" id="1.10.357.10">
    <property type="entry name" value="Tetracycline Repressor, domain 2"/>
    <property type="match status" value="1"/>
</dbReference>
<dbReference type="HAMAP" id="MF_01190">
    <property type="entry name" value="HTH_type_FabR"/>
    <property type="match status" value="1"/>
</dbReference>
<dbReference type="InterPro" id="IPR054129">
    <property type="entry name" value="DesT_TetR_C"/>
</dbReference>
<dbReference type="InterPro" id="IPR009057">
    <property type="entry name" value="Homeodomain-like_sf"/>
</dbReference>
<dbReference type="InterPro" id="IPR001647">
    <property type="entry name" value="HTH_TetR"/>
</dbReference>
<dbReference type="InterPro" id="IPR050692">
    <property type="entry name" value="HTH_transcr_repressor_FabR"/>
</dbReference>
<dbReference type="InterPro" id="IPR023764">
    <property type="entry name" value="Tscrpt_reg_HTH_FabR"/>
</dbReference>
<dbReference type="NCBIfam" id="NF008402">
    <property type="entry name" value="PRK11202.1"/>
    <property type="match status" value="1"/>
</dbReference>
<dbReference type="PANTHER" id="PTHR47752">
    <property type="entry name" value="HTH-TYPE TRANSCRIPTIONAL REPRESSOR FABR"/>
    <property type="match status" value="1"/>
</dbReference>
<dbReference type="PANTHER" id="PTHR47752:SF1">
    <property type="entry name" value="HTH-TYPE TRANSCRIPTIONAL REPRESSOR FABR"/>
    <property type="match status" value="1"/>
</dbReference>
<dbReference type="Pfam" id="PF21943">
    <property type="entry name" value="TetR_C_46"/>
    <property type="match status" value="1"/>
</dbReference>
<dbReference type="Pfam" id="PF00440">
    <property type="entry name" value="TetR_N"/>
    <property type="match status" value="1"/>
</dbReference>
<dbReference type="SUPFAM" id="SSF46689">
    <property type="entry name" value="Homeodomain-like"/>
    <property type="match status" value="1"/>
</dbReference>
<dbReference type="PROSITE" id="PS50977">
    <property type="entry name" value="HTH_TETR_2"/>
    <property type="match status" value="1"/>
</dbReference>
<organism>
    <name type="scientific">Shigella boydii serotype 18 (strain CDC 3083-94 / BS512)</name>
    <dbReference type="NCBI Taxonomy" id="344609"/>
    <lineage>
        <taxon>Bacteria</taxon>
        <taxon>Pseudomonadati</taxon>
        <taxon>Pseudomonadota</taxon>
        <taxon>Gammaproteobacteria</taxon>
        <taxon>Enterobacterales</taxon>
        <taxon>Enterobacteriaceae</taxon>
        <taxon>Shigella</taxon>
    </lineage>
</organism>
<feature type="chain" id="PRO_1000138361" description="HTH-type transcriptional repressor FabR">
    <location>
        <begin position="1"/>
        <end position="215"/>
    </location>
</feature>
<feature type="domain" description="HTH tetR-type" evidence="1">
    <location>
        <begin position="10"/>
        <end position="70"/>
    </location>
</feature>
<feature type="DNA-binding region" description="H-T-H motif" evidence="1">
    <location>
        <begin position="33"/>
        <end position="52"/>
    </location>
</feature>
<gene>
    <name evidence="1" type="primary">fabR</name>
    <name type="ordered locus">SbBS512_E4449</name>
</gene>
<proteinExistence type="inferred from homology"/>
<evidence type="ECO:0000255" key="1">
    <source>
        <dbReference type="HAMAP-Rule" id="MF_01190"/>
    </source>
</evidence>
<reference key="1">
    <citation type="submission" date="2008-05" db="EMBL/GenBank/DDBJ databases">
        <title>Complete sequence of Shigella boydii serotype 18 strain BS512.</title>
        <authorList>
            <person name="Rasko D.A."/>
            <person name="Rosovitz M."/>
            <person name="Maurelli A.T."/>
            <person name="Myers G."/>
            <person name="Seshadri R."/>
            <person name="Cer R."/>
            <person name="Jiang L."/>
            <person name="Ravel J."/>
            <person name="Sebastian Y."/>
        </authorList>
    </citation>
    <scope>NUCLEOTIDE SEQUENCE [LARGE SCALE GENOMIC DNA]</scope>
    <source>
        <strain>CDC 3083-94 / BS512</strain>
    </source>
</reference>
<accession>B2TWF8</accession>
<keyword id="KW-0963">Cytoplasm</keyword>
<keyword id="KW-0238">DNA-binding</keyword>
<keyword id="KW-0275">Fatty acid biosynthesis</keyword>
<keyword id="KW-0276">Fatty acid metabolism</keyword>
<keyword id="KW-0444">Lipid biosynthesis</keyword>
<keyword id="KW-0443">Lipid metabolism</keyword>
<keyword id="KW-1185">Reference proteome</keyword>
<keyword id="KW-0678">Repressor</keyword>
<keyword id="KW-0804">Transcription</keyword>
<keyword id="KW-0805">Transcription regulation</keyword>
<sequence length="215" mass="24418">MGIRAQQKEKTRRSLVEAAFSQLSAERSFASLSLREVAREAGIAPTSFYRHFRDVDELGLTMVDESGLMLRQLMRQARQRIAKGGSVIRTSVSTFMEFIGNNPNAFRLLLRERSGTSAAFRAAVAREIQHFIAELADYLELENHMPRAFTEAQAEAMVTIVFSAGAEALDVGVEQRRQLEERLVLQLRMISKGAYYWYRREQEKTAIIPGNVKDE</sequence>
<name>FABR_SHIB3</name>
<comment type="function">
    <text evidence="1">Represses the transcription of fabB, involved in unsaturated fatty acid (UFA) biosynthesis. By controlling UFA production, FabR directly influences the physical properties of the membrane bilayer.</text>
</comment>
<comment type="subunit">
    <text evidence="1">Homodimer.</text>
</comment>
<comment type="subcellular location">
    <subcellularLocation>
        <location evidence="1">Cytoplasm</location>
    </subcellularLocation>
</comment>